<comment type="function">
    <text evidence="1">Required for disulfide bond formation in some periplasmic proteins. Acts by oxidizing the DsbA protein.</text>
</comment>
<comment type="subcellular location">
    <subcellularLocation>
        <location evidence="1">Cell inner membrane</location>
        <topology evidence="1">Multi-pass membrane protein</topology>
    </subcellularLocation>
</comment>
<comment type="similarity">
    <text evidence="1">Belongs to the DsbB family.</text>
</comment>
<reference key="1">
    <citation type="journal article" date="2008" name="BMC Genomics">
        <title>The genome of Aeromonas salmonicida subsp. salmonicida A449: insights into the evolution of a fish pathogen.</title>
        <authorList>
            <person name="Reith M.E."/>
            <person name="Singh R.K."/>
            <person name="Curtis B."/>
            <person name="Boyd J.M."/>
            <person name="Bouevitch A."/>
            <person name="Kimball J."/>
            <person name="Munholland J."/>
            <person name="Murphy C."/>
            <person name="Sarty D."/>
            <person name="Williams J."/>
            <person name="Nash J.H."/>
            <person name="Johnson S.C."/>
            <person name="Brown L.L."/>
        </authorList>
    </citation>
    <scope>NUCLEOTIDE SEQUENCE [LARGE SCALE GENOMIC DNA]</scope>
    <source>
        <strain>A449</strain>
    </source>
</reference>
<feature type="chain" id="PRO_0000298335" description="Disulfide bond formation protein B">
    <location>
        <begin position="1"/>
        <end position="173"/>
    </location>
</feature>
<feature type="topological domain" description="Cytoplasmic" evidence="1">
    <location>
        <begin position="1"/>
        <end position="14"/>
    </location>
</feature>
<feature type="transmembrane region" description="Helical" evidence="1">
    <location>
        <begin position="15"/>
        <end position="31"/>
    </location>
</feature>
<feature type="topological domain" description="Periplasmic" evidence="1">
    <location>
        <begin position="32"/>
        <end position="49"/>
    </location>
</feature>
<feature type="transmembrane region" description="Helical" evidence="1">
    <location>
        <begin position="50"/>
        <end position="65"/>
    </location>
</feature>
<feature type="topological domain" description="Cytoplasmic" evidence="1">
    <location>
        <begin position="66"/>
        <end position="72"/>
    </location>
</feature>
<feature type="transmembrane region" description="Helical" evidence="1">
    <location>
        <begin position="73"/>
        <end position="90"/>
    </location>
</feature>
<feature type="topological domain" description="Periplasmic" evidence="1">
    <location>
        <begin position="91"/>
        <end position="145"/>
    </location>
</feature>
<feature type="transmembrane region" description="Helical" evidence="1">
    <location>
        <begin position="146"/>
        <end position="164"/>
    </location>
</feature>
<feature type="topological domain" description="Cytoplasmic" evidence="1">
    <location>
        <begin position="165"/>
        <end position="173"/>
    </location>
</feature>
<feature type="disulfide bond" description="Redox-active" evidence="1">
    <location>
        <begin position="41"/>
        <end position="44"/>
    </location>
</feature>
<feature type="disulfide bond" description="Redox-active" evidence="1">
    <location>
        <begin position="105"/>
        <end position="131"/>
    </location>
</feature>
<accession>A4SN81</accession>
<proteinExistence type="inferred from homology"/>
<protein>
    <recommendedName>
        <fullName evidence="1">Disulfide bond formation protein B</fullName>
    </recommendedName>
    <alternativeName>
        <fullName evidence="1">Disulfide oxidoreductase</fullName>
    </alternativeName>
</protein>
<organism>
    <name type="scientific">Aeromonas salmonicida (strain A449)</name>
    <dbReference type="NCBI Taxonomy" id="382245"/>
    <lineage>
        <taxon>Bacteria</taxon>
        <taxon>Pseudomonadati</taxon>
        <taxon>Pseudomonadota</taxon>
        <taxon>Gammaproteobacteria</taxon>
        <taxon>Aeromonadales</taxon>
        <taxon>Aeromonadaceae</taxon>
        <taxon>Aeromonas</taxon>
    </lineage>
</organism>
<dbReference type="EMBL" id="CP000644">
    <property type="protein sequence ID" value="ABO90353.1"/>
    <property type="molecule type" value="Genomic_DNA"/>
</dbReference>
<dbReference type="RefSeq" id="WP_005310996.1">
    <property type="nucleotide sequence ID" value="NC_009348.1"/>
</dbReference>
<dbReference type="SMR" id="A4SN81"/>
<dbReference type="STRING" id="29491.GCA_000820065_01625"/>
<dbReference type="KEGG" id="asa:ASA_2303"/>
<dbReference type="eggNOG" id="COG1495">
    <property type="taxonomic scope" value="Bacteria"/>
</dbReference>
<dbReference type="HOGENOM" id="CLU_098660_2_0_6"/>
<dbReference type="Proteomes" id="UP000000225">
    <property type="component" value="Chromosome"/>
</dbReference>
<dbReference type="GO" id="GO:0005886">
    <property type="term" value="C:plasma membrane"/>
    <property type="evidence" value="ECO:0007669"/>
    <property type="project" value="UniProtKB-SubCell"/>
</dbReference>
<dbReference type="GO" id="GO:0009055">
    <property type="term" value="F:electron transfer activity"/>
    <property type="evidence" value="ECO:0007669"/>
    <property type="project" value="UniProtKB-UniRule"/>
</dbReference>
<dbReference type="GO" id="GO:0015035">
    <property type="term" value="F:protein-disulfide reductase activity"/>
    <property type="evidence" value="ECO:0007669"/>
    <property type="project" value="UniProtKB-UniRule"/>
</dbReference>
<dbReference type="GO" id="GO:0006457">
    <property type="term" value="P:protein folding"/>
    <property type="evidence" value="ECO:0007669"/>
    <property type="project" value="InterPro"/>
</dbReference>
<dbReference type="Gene3D" id="1.20.1550.10">
    <property type="entry name" value="DsbB-like"/>
    <property type="match status" value="1"/>
</dbReference>
<dbReference type="HAMAP" id="MF_00286">
    <property type="entry name" value="DsbB"/>
    <property type="match status" value="1"/>
</dbReference>
<dbReference type="InterPro" id="IPR003752">
    <property type="entry name" value="DiS_bond_form_DsbB/BdbC"/>
</dbReference>
<dbReference type="InterPro" id="IPR022920">
    <property type="entry name" value="Disulphide_bond_form_DsbB"/>
</dbReference>
<dbReference type="InterPro" id="IPR050183">
    <property type="entry name" value="DsbB"/>
</dbReference>
<dbReference type="InterPro" id="IPR023380">
    <property type="entry name" value="DsbB-like_sf"/>
</dbReference>
<dbReference type="NCBIfam" id="NF002485">
    <property type="entry name" value="PRK01749.1"/>
    <property type="match status" value="1"/>
</dbReference>
<dbReference type="PANTHER" id="PTHR36570">
    <property type="entry name" value="DISULFIDE BOND FORMATION PROTEIN B"/>
    <property type="match status" value="1"/>
</dbReference>
<dbReference type="PANTHER" id="PTHR36570:SF2">
    <property type="entry name" value="DISULFIDE BOND FORMATION PROTEIN B"/>
    <property type="match status" value="1"/>
</dbReference>
<dbReference type="Pfam" id="PF02600">
    <property type="entry name" value="DsbB"/>
    <property type="match status" value="1"/>
</dbReference>
<dbReference type="SUPFAM" id="SSF158442">
    <property type="entry name" value="DsbB-like"/>
    <property type="match status" value="1"/>
</dbReference>
<sequence>MIEFLRRIAAHRLAWGLLAASALFLELSALFFQYVLGLHPCVMCVYERLAILGVLSAGLLGMVAPEKWYLRWSALLLWGYSAFRGLQLALKHVDYQMNPSPFNVCSPFADFPSWAPLDQWLPWLFFPDGDCSEISWQFLSFSMPQWLVAIFAAYLLVFVVVTIGNLVKGRCCS</sequence>
<gene>
    <name evidence="1" type="primary">dsbB</name>
    <name type="ordered locus">ASA_2303</name>
</gene>
<name>DSBB_AERS4</name>
<evidence type="ECO:0000255" key="1">
    <source>
        <dbReference type="HAMAP-Rule" id="MF_00286"/>
    </source>
</evidence>
<keyword id="KW-0997">Cell inner membrane</keyword>
<keyword id="KW-1003">Cell membrane</keyword>
<keyword id="KW-0143">Chaperone</keyword>
<keyword id="KW-1015">Disulfide bond</keyword>
<keyword id="KW-0249">Electron transport</keyword>
<keyword id="KW-0472">Membrane</keyword>
<keyword id="KW-0560">Oxidoreductase</keyword>
<keyword id="KW-0676">Redox-active center</keyword>
<keyword id="KW-0812">Transmembrane</keyword>
<keyword id="KW-1133">Transmembrane helix</keyword>
<keyword id="KW-0813">Transport</keyword>